<dbReference type="EC" id="6.1.1.5" evidence="1"/>
<dbReference type="EMBL" id="AE015450">
    <property type="protein sequence ID" value="AAP56669.2"/>
    <property type="molecule type" value="Genomic_DNA"/>
</dbReference>
<dbReference type="RefSeq" id="WP_011113560.1">
    <property type="nucleotide sequence ID" value="NC_004829.2"/>
</dbReference>
<dbReference type="SMR" id="Q7NBG0"/>
<dbReference type="GeneID" id="93510150"/>
<dbReference type="KEGG" id="mga:MGA_1196"/>
<dbReference type="PATRIC" id="fig|233150.7.peg.353"/>
<dbReference type="HOGENOM" id="CLU_001493_7_0_14"/>
<dbReference type="OrthoDB" id="9810365at2"/>
<dbReference type="Proteomes" id="UP000001418">
    <property type="component" value="Chromosome"/>
</dbReference>
<dbReference type="GO" id="GO:0005829">
    <property type="term" value="C:cytosol"/>
    <property type="evidence" value="ECO:0007669"/>
    <property type="project" value="TreeGrafter"/>
</dbReference>
<dbReference type="GO" id="GO:0002161">
    <property type="term" value="F:aminoacyl-tRNA deacylase activity"/>
    <property type="evidence" value="ECO:0007669"/>
    <property type="project" value="InterPro"/>
</dbReference>
<dbReference type="GO" id="GO:0005524">
    <property type="term" value="F:ATP binding"/>
    <property type="evidence" value="ECO:0007669"/>
    <property type="project" value="UniProtKB-UniRule"/>
</dbReference>
<dbReference type="GO" id="GO:0004822">
    <property type="term" value="F:isoleucine-tRNA ligase activity"/>
    <property type="evidence" value="ECO:0007669"/>
    <property type="project" value="UniProtKB-UniRule"/>
</dbReference>
<dbReference type="GO" id="GO:0000049">
    <property type="term" value="F:tRNA binding"/>
    <property type="evidence" value="ECO:0007669"/>
    <property type="project" value="InterPro"/>
</dbReference>
<dbReference type="GO" id="GO:0008270">
    <property type="term" value="F:zinc ion binding"/>
    <property type="evidence" value="ECO:0007669"/>
    <property type="project" value="UniProtKB-UniRule"/>
</dbReference>
<dbReference type="GO" id="GO:0006428">
    <property type="term" value="P:isoleucyl-tRNA aminoacylation"/>
    <property type="evidence" value="ECO:0007669"/>
    <property type="project" value="UniProtKB-UniRule"/>
</dbReference>
<dbReference type="CDD" id="cd07960">
    <property type="entry name" value="Anticodon_Ia_Ile_BEm"/>
    <property type="match status" value="1"/>
</dbReference>
<dbReference type="Gene3D" id="1.10.730.20">
    <property type="match status" value="1"/>
</dbReference>
<dbReference type="Gene3D" id="3.40.50.620">
    <property type="entry name" value="HUPs"/>
    <property type="match status" value="2"/>
</dbReference>
<dbReference type="Gene3D" id="3.90.740.10">
    <property type="entry name" value="Valyl/Leucyl/Isoleucyl-tRNA synthetase, editing domain"/>
    <property type="match status" value="1"/>
</dbReference>
<dbReference type="HAMAP" id="MF_02002">
    <property type="entry name" value="Ile_tRNA_synth_type1"/>
    <property type="match status" value="1"/>
</dbReference>
<dbReference type="InterPro" id="IPR001412">
    <property type="entry name" value="aa-tRNA-synth_I_CS"/>
</dbReference>
<dbReference type="InterPro" id="IPR002300">
    <property type="entry name" value="aa-tRNA-synth_Ia"/>
</dbReference>
<dbReference type="InterPro" id="IPR033708">
    <property type="entry name" value="Anticodon_Ile_BEm"/>
</dbReference>
<dbReference type="InterPro" id="IPR002301">
    <property type="entry name" value="Ile-tRNA-ligase"/>
</dbReference>
<dbReference type="InterPro" id="IPR023585">
    <property type="entry name" value="Ile-tRNA-ligase_type1"/>
</dbReference>
<dbReference type="InterPro" id="IPR050081">
    <property type="entry name" value="Ile-tRNA_ligase"/>
</dbReference>
<dbReference type="InterPro" id="IPR013155">
    <property type="entry name" value="M/V/L/I-tRNA-synth_anticd-bd"/>
</dbReference>
<dbReference type="InterPro" id="IPR014729">
    <property type="entry name" value="Rossmann-like_a/b/a_fold"/>
</dbReference>
<dbReference type="InterPro" id="IPR009080">
    <property type="entry name" value="tRNAsynth_Ia_anticodon-bd"/>
</dbReference>
<dbReference type="InterPro" id="IPR009008">
    <property type="entry name" value="Val/Leu/Ile-tRNA-synth_edit"/>
</dbReference>
<dbReference type="InterPro" id="IPR010663">
    <property type="entry name" value="Znf_FPG/IleRS"/>
</dbReference>
<dbReference type="NCBIfam" id="TIGR00392">
    <property type="entry name" value="ileS"/>
    <property type="match status" value="1"/>
</dbReference>
<dbReference type="PANTHER" id="PTHR42765:SF1">
    <property type="entry name" value="ISOLEUCINE--TRNA LIGASE, MITOCHONDRIAL"/>
    <property type="match status" value="1"/>
</dbReference>
<dbReference type="PANTHER" id="PTHR42765">
    <property type="entry name" value="SOLEUCYL-TRNA SYNTHETASE"/>
    <property type="match status" value="1"/>
</dbReference>
<dbReference type="Pfam" id="PF08264">
    <property type="entry name" value="Anticodon_1"/>
    <property type="match status" value="1"/>
</dbReference>
<dbReference type="Pfam" id="PF00133">
    <property type="entry name" value="tRNA-synt_1"/>
    <property type="match status" value="1"/>
</dbReference>
<dbReference type="Pfam" id="PF06827">
    <property type="entry name" value="zf-FPG_IleRS"/>
    <property type="match status" value="1"/>
</dbReference>
<dbReference type="PRINTS" id="PR00984">
    <property type="entry name" value="TRNASYNTHILE"/>
</dbReference>
<dbReference type="SUPFAM" id="SSF47323">
    <property type="entry name" value="Anticodon-binding domain of a subclass of class I aminoacyl-tRNA synthetases"/>
    <property type="match status" value="1"/>
</dbReference>
<dbReference type="SUPFAM" id="SSF52374">
    <property type="entry name" value="Nucleotidylyl transferase"/>
    <property type="match status" value="1"/>
</dbReference>
<dbReference type="SUPFAM" id="SSF50677">
    <property type="entry name" value="ValRS/IleRS/LeuRS editing domain"/>
    <property type="match status" value="1"/>
</dbReference>
<dbReference type="PROSITE" id="PS00178">
    <property type="entry name" value="AA_TRNA_LIGASE_I"/>
    <property type="match status" value="1"/>
</dbReference>
<gene>
    <name evidence="1" type="primary">ileS</name>
    <name type="ordered locus">MYCGA3190</name>
    <name type="ORF">MGA_1196</name>
</gene>
<reference key="1">
    <citation type="journal article" date="2003" name="Microbiology">
        <title>The complete genome sequence of the avian pathogen Mycoplasma gallisepticum strain R(low).</title>
        <authorList>
            <person name="Papazisi L."/>
            <person name="Gorton T.S."/>
            <person name="Kutish G."/>
            <person name="Markham P.F."/>
            <person name="Browning G.F."/>
            <person name="Nguyen D.K."/>
            <person name="Swartzell S."/>
            <person name="Madan A."/>
            <person name="Mahairas G."/>
            <person name="Geary S.J."/>
        </authorList>
    </citation>
    <scope>NUCLEOTIDE SEQUENCE [LARGE SCALE GENOMIC DNA]</scope>
    <source>
        <strain>R(low / passage 15 / clone 2)</strain>
    </source>
</reference>
<protein>
    <recommendedName>
        <fullName evidence="1">Isoleucine--tRNA ligase</fullName>
        <ecNumber evidence="1">6.1.1.5</ecNumber>
    </recommendedName>
    <alternativeName>
        <fullName evidence="1">Isoleucyl-tRNA synthetase</fullName>
        <shortName evidence="1">IleRS</shortName>
    </alternativeName>
</protein>
<sequence>MNKNYKDTLLMPSTDFEMKANLATKESKIQQKWLDDQIYQLRLEKNQNNEQKILHDGPPYANGDIHVGHTMNKILKDVIVRRWLMQGYYSPFILGWDTHGLPIEHAVQSKLGQKEFFKLSVLERIEVCRDFAFNQVQKQKEQFSSLGLVTDFKVCYHTYDKQYEIDQLKVFAKMINEGLVYQDYKPIYWSWSSKSVLSDAEIEYKETKSPSIYVTFKTLDNEVIGKDVNLVIWTTTPWTLPSNLAISVHPELEYTLFEVNGQKYLVGSNLYEQLIAKFNFENPKVIQKLKGSSLDKIKYQHCLYDQITGIVVLGEHVSDSDGTGLVHTAPGFGLEDFIVCKKYGIDAYVPINDEGCFDQTVHDPELVGVFYDDANKLIAQKLEARNCLLSLNFINHQAAHDWRTKKPVIYRATKQWFINIKSIKNQLVENINTVKYPNERYAKRMLSMVAERSDWCISRQRTWGLPIPIIFDENHEPILDKELIDNTLRIMEAEGIKAWYEHDAKYFLTNKYDPRKTYYKESDILDVWFDSGTSFNVLKENGIKDKATIYFEGSDQYRGWFNSSMICATVLNKTAPYKELISHGFTLDEKGMKMSKSQGNVISPLTIIKNKGADILRLWAASIDYSNDHRIGNHIIEQNSEIYRKIRNSLFRYILGNLNDFDFKPLDQYQLSLADLLTINHVNKSFKKIDQAYLNYDYLEITKEVNQMVVELSAWYFELIKDSLYCNDENDPTRKAIQATLNYIFINSLFRIAPILVHTAEEAYSHYQATNKEKSVYLIDPPALFEIKTDLDLDQLATEFSKLKDDVYAEIEKLRKDKVLAKSNEAVVYLSKQYLDINKHLVKQLKTWLNVAEVHFTKNDQITVEKTDFSKCLRCWNYFKELSKNNNEVCQRCSELV</sequence>
<keyword id="KW-0030">Aminoacyl-tRNA synthetase</keyword>
<keyword id="KW-0067">ATP-binding</keyword>
<keyword id="KW-0963">Cytoplasm</keyword>
<keyword id="KW-0436">Ligase</keyword>
<keyword id="KW-0479">Metal-binding</keyword>
<keyword id="KW-0547">Nucleotide-binding</keyword>
<keyword id="KW-0648">Protein biosynthesis</keyword>
<keyword id="KW-1185">Reference proteome</keyword>
<keyword id="KW-0862">Zinc</keyword>
<organism>
    <name type="scientific">Mycoplasmoides gallisepticum (strain R(low / passage 15 / clone 2))</name>
    <name type="common">Mycoplasma gallisepticum</name>
    <dbReference type="NCBI Taxonomy" id="710127"/>
    <lineage>
        <taxon>Bacteria</taxon>
        <taxon>Bacillati</taxon>
        <taxon>Mycoplasmatota</taxon>
        <taxon>Mycoplasmoidales</taxon>
        <taxon>Mycoplasmoidaceae</taxon>
        <taxon>Mycoplasmoides</taxon>
    </lineage>
</organism>
<evidence type="ECO:0000255" key="1">
    <source>
        <dbReference type="HAMAP-Rule" id="MF_02002"/>
    </source>
</evidence>
<accession>Q7NBG0</accession>
<name>SYI_MYCGA</name>
<feature type="chain" id="PRO_0000098416" description="Isoleucine--tRNA ligase">
    <location>
        <begin position="1"/>
        <end position="897"/>
    </location>
</feature>
<feature type="short sequence motif" description="'HIGH' region">
    <location>
        <begin position="59"/>
        <end position="69"/>
    </location>
</feature>
<feature type="short sequence motif" description="'KMSKS' region">
    <location>
        <begin position="593"/>
        <end position="597"/>
    </location>
</feature>
<feature type="binding site" evidence="1">
    <location>
        <position position="552"/>
    </location>
    <ligand>
        <name>L-isoleucyl-5'-AMP</name>
        <dbReference type="ChEBI" id="CHEBI:178002"/>
    </ligand>
</feature>
<feature type="binding site" evidence="1">
    <location>
        <position position="596"/>
    </location>
    <ligand>
        <name>ATP</name>
        <dbReference type="ChEBI" id="CHEBI:30616"/>
    </ligand>
</feature>
<feature type="binding site" evidence="1">
    <location>
        <position position="872"/>
    </location>
    <ligand>
        <name>Zn(2+)</name>
        <dbReference type="ChEBI" id="CHEBI:29105"/>
    </ligand>
</feature>
<feature type="binding site" evidence="1">
    <location>
        <position position="875"/>
    </location>
    <ligand>
        <name>Zn(2+)</name>
        <dbReference type="ChEBI" id="CHEBI:29105"/>
    </ligand>
</feature>
<feature type="binding site" evidence="1">
    <location>
        <position position="890"/>
    </location>
    <ligand>
        <name>Zn(2+)</name>
        <dbReference type="ChEBI" id="CHEBI:29105"/>
    </ligand>
</feature>
<feature type="binding site" evidence="1">
    <location>
        <position position="893"/>
    </location>
    <ligand>
        <name>Zn(2+)</name>
        <dbReference type="ChEBI" id="CHEBI:29105"/>
    </ligand>
</feature>
<comment type="function">
    <text evidence="1">Catalyzes the attachment of isoleucine to tRNA(Ile). As IleRS can inadvertently accommodate and process structurally similar amino acids such as valine, to avoid such errors it has two additional distinct tRNA(Ile)-dependent editing activities. One activity is designated as 'pretransfer' editing and involves the hydrolysis of activated Val-AMP. The other activity is designated 'posttransfer' editing and involves deacylation of mischarged Val-tRNA(Ile).</text>
</comment>
<comment type="catalytic activity">
    <reaction evidence="1">
        <text>tRNA(Ile) + L-isoleucine + ATP = L-isoleucyl-tRNA(Ile) + AMP + diphosphate</text>
        <dbReference type="Rhea" id="RHEA:11060"/>
        <dbReference type="Rhea" id="RHEA-COMP:9666"/>
        <dbReference type="Rhea" id="RHEA-COMP:9695"/>
        <dbReference type="ChEBI" id="CHEBI:30616"/>
        <dbReference type="ChEBI" id="CHEBI:33019"/>
        <dbReference type="ChEBI" id="CHEBI:58045"/>
        <dbReference type="ChEBI" id="CHEBI:78442"/>
        <dbReference type="ChEBI" id="CHEBI:78528"/>
        <dbReference type="ChEBI" id="CHEBI:456215"/>
        <dbReference type="EC" id="6.1.1.5"/>
    </reaction>
</comment>
<comment type="cofactor">
    <cofactor evidence="1">
        <name>Zn(2+)</name>
        <dbReference type="ChEBI" id="CHEBI:29105"/>
    </cofactor>
    <text evidence="1">Binds 1 zinc ion per subunit.</text>
</comment>
<comment type="subunit">
    <text evidence="1">Monomer.</text>
</comment>
<comment type="subcellular location">
    <subcellularLocation>
        <location evidence="1">Cytoplasm</location>
    </subcellularLocation>
</comment>
<comment type="domain">
    <text evidence="1">IleRS has two distinct active sites: one for aminoacylation and one for editing. The misactivated valine is translocated from the active site to the editing site, which sterically excludes the correctly activated isoleucine. The single editing site contains two valyl binding pockets, one specific for each substrate (Val-AMP or Val-tRNA(Ile)).</text>
</comment>
<comment type="similarity">
    <text evidence="1">Belongs to the class-I aminoacyl-tRNA synthetase family. IleS type 1 subfamily.</text>
</comment>
<proteinExistence type="inferred from homology"/>